<accession>Q9L9F3</accession>
<accession>G5DAD0</accession>
<accession>T1NXB4</accession>
<gene>
    <name type="primary">novO</name>
</gene>
<evidence type="ECO:0000269" key="1">
    <source>
    </source>
</evidence>
<evidence type="ECO:0000305" key="2"/>
<evidence type="ECO:0007829" key="3">
    <source>
        <dbReference type="PDB" id="5MGZ"/>
    </source>
</evidence>
<protein>
    <recommendedName>
        <fullName>8-demethylnovobiocic acid C(8)-methyltransferase</fullName>
        <ecNumber>2.1.1.284</ecNumber>
    </recommendedName>
    <alternativeName>
        <fullName>Novobiocin biosynthesis protein O</fullName>
    </alternativeName>
</protein>
<organism>
    <name type="scientific">Streptomyces niveus</name>
    <name type="common">Streptomyces spheroides</name>
    <dbReference type="NCBI Taxonomy" id="193462"/>
    <lineage>
        <taxon>Bacteria</taxon>
        <taxon>Bacillati</taxon>
        <taxon>Actinomycetota</taxon>
        <taxon>Actinomycetes</taxon>
        <taxon>Kitasatosporales</taxon>
        <taxon>Streptomycetaceae</taxon>
        <taxon>Streptomyces</taxon>
    </lineage>
</organism>
<name>NOVO_STRNV</name>
<keyword id="KW-0002">3D-structure</keyword>
<keyword id="KW-0045">Antibiotic biosynthesis</keyword>
<keyword id="KW-0489">Methyltransferase</keyword>
<keyword id="KW-0949">S-adenosyl-L-methionine</keyword>
<keyword id="KW-0808">Transferase</keyword>
<sequence>MKIEAITGSEAEAFHRMGSQASHRYDEFVDLLVGAGIADGQTVVDLCCGSGELEVILSSRFPSLNLVGVDLSEDMVRIAREYAAEQGKALEFRHGDAQLLAGMEDLAGKADLVVSRNAFHRLTRLPAAFDTMLRLAKPGGAVLNCSFIHPSDFDESGFRAWVTFLNQRPWDSEMQIVWALAHHYAPRLDDYREALAQAARETPVSEQRVWIDDQGYGVPTVKCFARRAAA</sequence>
<comment type="function">
    <text evidence="1">C-methyltransferase that methylates 8-demethylnovobiocic acid to produce novobiocic acid in the novobiocin biosynthesis pathway. Novobiocin is an aminocoumarin family antibiotic that targets bacterial DNA gyrases.</text>
</comment>
<comment type="catalytic activity">
    <reaction evidence="1">
        <text>8-desmethylnovobiocic acid + S-adenosyl-L-methionine = novobiocic acid + S-adenosyl-L-homocysteine + H(+)</text>
        <dbReference type="Rhea" id="RHEA:36651"/>
        <dbReference type="ChEBI" id="CHEBI:15378"/>
        <dbReference type="ChEBI" id="CHEBI:57856"/>
        <dbReference type="ChEBI" id="CHEBI:59789"/>
        <dbReference type="ChEBI" id="CHEBI:73953"/>
        <dbReference type="ChEBI" id="CHEBI:73954"/>
        <dbReference type="EC" id="2.1.1.284"/>
    </reaction>
</comment>
<comment type="pathway">
    <text evidence="1">Antibiotic biosynthesis; novobiocin biosynthesis.</text>
</comment>
<comment type="similarity">
    <text evidence="2">Belongs to the methyltransferase superfamily.</text>
</comment>
<reference key="1">
    <citation type="journal article" date="2000" name="Antimicrob. Agents Chemother.">
        <title>Identification of the novobiocin biosynthetic gene cluster of Streptomyces spheroides NCIB 11891.</title>
        <authorList>
            <person name="Steffensky M."/>
            <person name="Muhlenweg A."/>
            <person name="Wang Z.X."/>
            <person name="Li S.M."/>
            <person name="Heide L."/>
        </authorList>
    </citation>
    <scope>NUCLEOTIDE SEQUENCE [GENOMIC DNA]</scope>
    <source>
        <strain>ATCC 23965 / DSM 40292 / JCM 4252 / NBRC 12917 / NCIMB 11891 / NRRL 2449</strain>
    </source>
</reference>
<reference key="2">
    <citation type="submission" date="2011-10" db="EMBL/GenBank/DDBJ databases">
        <title>Methyltransferase NovO - a versatile catalyst for enzymatic Friedel-Crafts alkylation.</title>
        <authorList>
            <person name="Stecher H."/>
            <person name="Eiteljoerg I."/>
            <person name="Gruber-Khadjawi M."/>
        </authorList>
    </citation>
    <scope>NUCLEOTIDE SEQUENCE [GENOMIC DNA]</scope>
    <source>
        <strain>ATCC 23965 / DSM 40292 / JCM 4252 / NBRC 12917 / NCIMB 11891 / NRRL 2449</strain>
    </source>
</reference>
<reference key="3">
    <citation type="journal article" date="2005" name="Biochemistry">
        <title>CouO and NovO: C-methyltransferases for tailoring the aminocoumarin scaffold in coumermycin and novobiocin antibiotic biosynthesis.</title>
        <authorList>
            <person name="Pacholec M."/>
            <person name="Tao J."/>
            <person name="Walsh C.T."/>
        </authorList>
    </citation>
    <scope>FUNCTION</scope>
    <scope>CATALYTIC ACTIVITY</scope>
    <scope>PATHWAY</scope>
    <source>
        <strain>ATCC 23965 / DSM 40292 / JCM 4252 / NBRC 12917 / NCIMB 11891 / NRRL 2449</strain>
    </source>
</reference>
<feature type="chain" id="PRO_0000424002" description="8-demethylnovobiocic acid C(8)-methyltransferase">
    <location>
        <begin position="1"/>
        <end position="230"/>
    </location>
</feature>
<feature type="helix" evidence="3">
    <location>
        <begin position="8"/>
        <end position="18"/>
    </location>
</feature>
<feature type="helix" evidence="3">
    <location>
        <begin position="22"/>
        <end position="25"/>
    </location>
</feature>
<feature type="helix" evidence="3">
    <location>
        <begin position="26"/>
        <end position="35"/>
    </location>
</feature>
<feature type="strand" evidence="3">
    <location>
        <begin position="42"/>
        <end position="46"/>
    </location>
</feature>
<feature type="helix" evidence="3">
    <location>
        <begin position="52"/>
        <end position="60"/>
    </location>
</feature>
<feature type="strand" evidence="3">
    <location>
        <begin position="65"/>
        <end position="71"/>
    </location>
</feature>
<feature type="helix" evidence="3">
    <location>
        <begin position="73"/>
        <end position="85"/>
    </location>
</feature>
<feature type="strand" evidence="3">
    <location>
        <begin position="91"/>
        <end position="94"/>
    </location>
</feature>
<feature type="helix" evidence="3">
    <location>
        <begin position="104"/>
        <end position="106"/>
    </location>
</feature>
<feature type="turn" evidence="3">
    <location>
        <begin position="107"/>
        <end position="109"/>
    </location>
</feature>
<feature type="strand" evidence="3">
    <location>
        <begin position="110"/>
        <end position="117"/>
    </location>
</feature>
<feature type="helix" evidence="3">
    <location>
        <begin position="119"/>
        <end position="121"/>
    </location>
</feature>
<feature type="helix" evidence="3">
    <location>
        <begin position="125"/>
        <end position="135"/>
    </location>
</feature>
<feature type="strand" evidence="3">
    <location>
        <begin position="136"/>
        <end position="146"/>
    </location>
</feature>
<feature type="helix" evidence="3">
    <location>
        <begin position="150"/>
        <end position="152"/>
    </location>
</feature>
<feature type="helix" evidence="3">
    <location>
        <begin position="155"/>
        <end position="165"/>
    </location>
</feature>
<feature type="helix" evidence="3">
    <location>
        <begin position="174"/>
        <end position="183"/>
    </location>
</feature>
<feature type="helix" evidence="3">
    <location>
        <begin position="188"/>
        <end position="201"/>
    </location>
</feature>
<feature type="strand" evidence="3">
    <location>
        <begin position="204"/>
        <end position="212"/>
    </location>
</feature>
<feature type="strand" evidence="3">
    <location>
        <begin position="214"/>
        <end position="218"/>
    </location>
</feature>
<feature type="strand" evidence="3">
    <location>
        <begin position="220"/>
        <end position="227"/>
    </location>
</feature>
<dbReference type="EC" id="2.1.1.284"/>
<dbReference type="EMBL" id="AF170880">
    <property type="protein sequence ID" value="AAF67508.2"/>
    <property type="molecule type" value="Genomic_DNA"/>
</dbReference>
<dbReference type="EMBL" id="JN606326">
    <property type="protein sequence ID" value="AEP25522.1"/>
    <property type="molecule type" value="Genomic_DNA"/>
</dbReference>
<dbReference type="RefSeq" id="WP_078494423.1">
    <property type="nucleotide sequence ID" value="NZ_JBEZOH010000009.1"/>
</dbReference>
<dbReference type="PDB" id="5MGZ">
    <property type="method" value="X-ray"/>
    <property type="resolution" value="1.90 A"/>
    <property type="chains" value="A/B=1-230"/>
</dbReference>
<dbReference type="PDBsum" id="5MGZ"/>
<dbReference type="SMR" id="Q9L9F3"/>
<dbReference type="KEGG" id="ag:AAF67508"/>
<dbReference type="BioCyc" id="MetaCyc:MONOMER-18055"/>
<dbReference type="UniPathway" id="UPA01035"/>
<dbReference type="GO" id="GO:0102526">
    <property type="term" value="F:8-demethylnovobiocic acid C8-methyltransferase activity"/>
    <property type="evidence" value="ECO:0007669"/>
    <property type="project" value="UniProtKB-EC"/>
</dbReference>
<dbReference type="GO" id="GO:0008168">
    <property type="term" value="F:methyltransferase activity"/>
    <property type="evidence" value="ECO:0000314"/>
    <property type="project" value="UniProtKB"/>
</dbReference>
<dbReference type="GO" id="GO:0032259">
    <property type="term" value="P:methylation"/>
    <property type="evidence" value="ECO:0000314"/>
    <property type="project" value="UniProtKB"/>
</dbReference>
<dbReference type="GO" id="GO:0043642">
    <property type="term" value="P:novobiocin biosynthetic process"/>
    <property type="evidence" value="ECO:0000314"/>
    <property type="project" value="UniProtKB"/>
</dbReference>
<dbReference type="CDD" id="cd02440">
    <property type="entry name" value="AdoMet_MTases"/>
    <property type="match status" value="1"/>
</dbReference>
<dbReference type="FunFam" id="3.40.50.150:FF:000818">
    <property type="entry name" value="8-demethylnovobiocic acid C(8)-methyltransferase"/>
    <property type="match status" value="1"/>
</dbReference>
<dbReference type="Gene3D" id="3.40.50.150">
    <property type="entry name" value="Vaccinia Virus protein VP39"/>
    <property type="match status" value="1"/>
</dbReference>
<dbReference type="InterPro" id="IPR041698">
    <property type="entry name" value="Methyltransf_25"/>
</dbReference>
<dbReference type="InterPro" id="IPR029063">
    <property type="entry name" value="SAM-dependent_MTases_sf"/>
</dbReference>
<dbReference type="PANTHER" id="PTHR43861:SF1">
    <property type="entry name" value="TRANS-ACONITATE 2-METHYLTRANSFERASE"/>
    <property type="match status" value="1"/>
</dbReference>
<dbReference type="PANTHER" id="PTHR43861">
    <property type="entry name" value="TRANS-ACONITATE 2-METHYLTRANSFERASE-RELATED"/>
    <property type="match status" value="1"/>
</dbReference>
<dbReference type="Pfam" id="PF13649">
    <property type="entry name" value="Methyltransf_25"/>
    <property type="match status" value="1"/>
</dbReference>
<dbReference type="SUPFAM" id="SSF53335">
    <property type="entry name" value="S-adenosyl-L-methionine-dependent methyltransferases"/>
    <property type="match status" value="1"/>
</dbReference>
<proteinExistence type="evidence at protein level"/>